<reference key="1">
    <citation type="journal article" date="2004" name="Science">
        <title>The 1.2-megabase genome sequence of Mimivirus.</title>
        <authorList>
            <person name="Raoult D."/>
            <person name="Audic S."/>
            <person name="Robert C."/>
            <person name="Abergel C."/>
            <person name="Renesto P."/>
            <person name="Ogata H."/>
            <person name="La Scola B."/>
            <person name="Susan M."/>
            <person name="Claverie J.-M."/>
        </authorList>
    </citation>
    <scope>NUCLEOTIDE SEQUENCE [LARGE SCALE GENOMIC DNA]</scope>
    <source>
        <strain>Rowbotham-Bradford</strain>
    </source>
</reference>
<gene>
    <name type="ordered locus">MIMI_R592</name>
</gene>
<organism>
    <name type="scientific">Acanthamoeba polyphaga mimivirus</name>
    <name type="common">APMV</name>
    <dbReference type="NCBI Taxonomy" id="212035"/>
    <lineage>
        <taxon>Viruses</taxon>
        <taxon>Varidnaviria</taxon>
        <taxon>Bamfordvirae</taxon>
        <taxon>Nucleocytoviricota</taxon>
        <taxon>Megaviricetes</taxon>
        <taxon>Imitervirales</taxon>
        <taxon>Mimiviridae</taxon>
        <taxon>Megamimivirinae</taxon>
        <taxon>Mimivirus</taxon>
        <taxon>Mimivirus bradfordmassiliense</taxon>
    </lineage>
</organism>
<protein>
    <recommendedName>
        <fullName>Putative helicase R592</fullName>
        <ecNumber>3.6.4.-</ecNumber>
    </recommendedName>
</protein>
<name>YR592_MIMIV</name>
<dbReference type="EC" id="3.6.4.-"/>
<dbReference type="EMBL" id="AY653733">
    <property type="protein sequence ID" value="AAV50855.1"/>
    <property type="molecule type" value="Genomic_DNA"/>
</dbReference>
<dbReference type="KEGG" id="vg:9925228"/>
<dbReference type="OrthoDB" id="2678at10239"/>
<dbReference type="Proteomes" id="UP000001134">
    <property type="component" value="Genome"/>
</dbReference>
<dbReference type="GO" id="GO:0005524">
    <property type="term" value="F:ATP binding"/>
    <property type="evidence" value="ECO:0007669"/>
    <property type="project" value="UniProtKB-KW"/>
</dbReference>
<dbReference type="GO" id="GO:0008094">
    <property type="term" value="F:ATP-dependent activity, acting on DNA"/>
    <property type="evidence" value="ECO:0007669"/>
    <property type="project" value="TreeGrafter"/>
</dbReference>
<dbReference type="GO" id="GO:0004386">
    <property type="term" value="F:helicase activity"/>
    <property type="evidence" value="ECO:0007669"/>
    <property type="project" value="UniProtKB-KW"/>
</dbReference>
<dbReference type="GO" id="GO:0016787">
    <property type="term" value="F:hydrolase activity"/>
    <property type="evidence" value="ECO:0007669"/>
    <property type="project" value="UniProtKB-KW"/>
</dbReference>
<dbReference type="GO" id="GO:0008270">
    <property type="term" value="F:zinc ion binding"/>
    <property type="evidence" value="ECO:0007669"/>
    <property type="project" value="UniProtKB-KW"/>
</dbReference>
<dbReference type="GO" id="GO:0006281">
    <property type="term" value="P:DNA repair"/>
    <property type="evidence" value="ECO:0007669"/>
    <property type="project" value="TreeGrafter"/>
</dbReference>
<dbReference type="Gene3D" id="3.40.50.300">
    <property type="entry name" value="P-loop containing nucleotide triphosphate hydrolases"/>
    <property type="match status" value="2"/>
</dbReference>
<dbReference type="Gene3D" id="3.30.40.10">
    <property type="entry name" value="Zinc/RING finger domain, C3HC4 (zinc finger)"/>
    <property type="match status" value="1"/>
</dbReference>
<dbReference type="InterPro" id="IPR014001">
    <property type="entry name" value="Helicase_ATP-bd"/>
</dbReference>
<dbReference type="InterPro" id="IPR001650">
    <property type="entry name" value="Helicase_C-like"/>
</dbReference>
<dbReference type="InterPro" id="IPR027417">
    <property type="entry name" value="P-loop_NTPase"/>
</dbReference>
<dbReference type="InterPro" id="IPR000330">
    <property type="entry name" value="SNF2_N"/>
</dbReference>
<dbReference type="InterPro" id="IPR050628">
    <property type="entry name" value="SNF2_RAD54_helicase_TF"/>
</dbReference>
<dbReference type="InterPro" id="IPR001841">
    <property type="entry name" value="Znf_RING"/>
</dbReference>
<dbReference type="InterPro" id="IPR013083">
    <property type="entry name" value="Znf_RING/FYVE/PHD"/>
</dbReference>
<dbReference type="PANTHER" id="PTHR45626:SF26">
    <property type="entry name" value="FAMILY HELICASE, PUTATIVE (AFU_ORTHOLOGUE AFUA_2G09120)-RELATED"/>
    <property type="match status" value="1"/>
</dbReference>
<dbReference type="PANTHER" id="PTHR45626">
    <property type="entry name" value="TRANSCRIPTION TERMINATION FACTOR 2-RELATED"/>
    <property type="match status" value="1"/>
</dbReference>
<dbReference type="Pfam" id="PF00271">
    <property type="entry name" value="Helicase_C"/>
    <property type="match status" value="1"/>
</dbReference>
<dbReference type="Pfam" id="PF00176">
    <property type="entry name" value="SNF2-rel_dom"/>
    <property type="match status" value="1"/>
</dbReference>
<dbReference type="SMART" id="SM00490">
    <property type="entry name" value="HELICc"/>
    <property type="match status" value="1"/>
</dbReference>
<dbReference type="SUPFAM" id="SSF52540">
    <property type="entry name" value="P-loop containing nucleoside triphosphate hydrolases"/>
    <property type="match status" value="2"/>
</dbReference>
<dbReference type="SUPFAM" id="SSF57850">
    <property type="entry name" value="RING/U-box"/>
    <property type="match status" value="1"/>
</dbReference>
<dbReference type="PROSITE" id="PS51192">
    <property type="entry name" value="HELICASE_ATP_BIND_1"/>
    <property type="match status" value="1"/>
</dbReference>
<dbReference type="PROSITE" id="PS51194">
    <property type="entry name" value="HELICASE_CTER"/>
    <property type="match status" value="1"/>
</dbReference>
<dbReference type="PROSITE" id="PS50089">
    <property type="entry name" value="ZF_RING_2"/>
    <property type="match status" value="1"/>
</dbReference>
<feature type="chain" id="PRO_0000253914" description="Putative helicase R592">
    <location>
        <begin position="1"/>
        <end position="841"/>
    </location>
</feature>
<feature type="domain" description="Helicase ATP-binding" evidence="3">
    <location>
        <begin position="72"/>
        <end position="309"/>
    </location>
</feature>
<feature type="domain" description="Helicase C-terminal" evidence="4">
    <location>
        <begin position="531"/>
        <end position="682"/>
    </location>
</feature>
<feature type="zinc finger region" description="RING-type; degenerate" evidence="2">
    <location>
        <begin position="451"/>
        <end position="491"/>
    </location>
</feature>
<feature type="region of interest" description="Disordered" evidence="5">
    <location>
        <begin position="195"/>
        <end position="215"/>
    </location>
</feature>
<feature type="region of interest" description="Disordered" evidence="5">
    <location>
        <begin position="678"/>
        <end position="841"/>
    </location>
</feature>
<feature type="coiled-coil region" evidence="1">
    <location>
        <begin position="413"/>
        <end position="450"/>
    </location>
</feature>
<feature type="short sequence motif" description="DEAD box">
    <location>
        <begin position="266"/>
        <end position="269"/>
    </location>
</feature>
<feature type="compositionally biased region" description="Basic residues" evidence="5">
    <location>
        <begin position="195"/>
        <end position="205"/>
    </location>
</feature>
<feature type="compositionally biased region" description="Polar residues" evidence="5">
    <location>
        <begin position="206"/>
        <end position="215"/>
    </location>
</feature>
<feature type="compositionally biased region" description="Acidic residues" evidence="5">
    <location>
        <begin position="681"/>
        <end position="697"/>
    </location>
</feature>
<feature type="compositionally biased region" description="Basic and acidic residues" evidence="5">
    <location>
        <begin position="698"/>
        <end position="725"/>
    </location>
</feature>
<feature type="compositionally biased region" description="Basic residues" evidence="5">
    <location>
        <begin position="726"/>
        <end position="749"/>
    </location>
</feature>
<feature type="compositionally biased region" description="Acidic residues" evidence="5">
    <location>
        <begin position="765"/>
        <end position="774"/>
    </location>
</feature>
<feature type="compositionally biased region" description="Acidic residues" evidence="5">
    <location>
        <begin position="782"/>
        <end position="804"/>
    </location>
</feature>
<feature type="compositionally biased region" description="Basic residues" evidence="5">
    <location>
        <begin position="809"/>
        <end position="821"/>
    </location>
</feature>
<feature type="compositionally biased region" description="Basic residues" evidence="5">
    <location>
        <begin position="828"/>
        <end position="841"/>
    </location>
</feature>
<feature type="binding site" evidence="3">
    <location>
        <begin position="85"/>
        <end position="92"/>
    </location>
    <ligand>
        <name>ATP</name>
        <dbReference type="ChEBI" id="CHEBI:30616"/>
    </ligand>
</feature>
<evidence type="ECO:0000255" key="1"/>
<evidence type="ECO:0000255" key="2">
    <source>
        <dbReference type="PROSITE-ProRule" id="PRU00175"/>
    </source>
</evidence>
<evidence type="ECO:0000255" key="3">
    <source>
        <dbReference type="PROSITE-ProRule" id="PRU00541"/>
    </source>
</evidence>
<evidence type="ECO:0000255" key="4">
    <source>
        <dbReference type="PROSITE-ProRule" id="PRU00542"/>
    </source>
</evidence>
<evidence type="ECO:0000256" key="5">
    <source>
        <dbReference type="SAM" id="MobiDB-lite"/>
    </source>
</evidence>
<keyword id="KW-0067">ATP-binding</keyword>
<keyword id="KW-0175">Coiled coil</keyword>
<keyword id="KW-0347">Helicase</keyword>
<keyword id="KW-0378">Hydrolase</keyword>
<keyword id="KW-0479">Metal-binding</keyword>
<keyword id="KW-0547">Nucleotide-binding</keyword>
<keyword id="KW-1185">Reference proteome</keyword>
<keyword id="KW-0862">Zinc</keyword>
<keyword id="KW-0863">Zinc-finger</keyword>
<sequence>MSFFELDENSPKVDQPHGLKKVKLKDHQLTSIAAMRELETQASIVIDKPEIGSKFHASVGYCISDIEEFKDSTFVIETNSAILADKVGAGKTYTTIGLILKALVPKAHDRHITGTDNFSIKMISAKECEPVNLIVVPHNLINQWADFLDKSKLKYLKLNAESDFNAFLDIDYITKVYPLTREQISCKPIKNKPKKLPVKTTKKGGSKTQNKAQNDQKIYERKSLNMKKIRQALDTHNVFLLNVYRYKLFRQIFLTNKRKWARVIIDEMDSSAVPSIFDEYGNFNWFLTATPSAIFNRSCRRYVNKIFGQRQNLLNYFVVKNKEEYVDKSMILPKPFVFMINTMIQRVVAVFKDLIPQEVLQLINSGNMKEAITKLNCDVDTEENIIKILTGKINTELHNLETELEYVNNLIPQDVDAHENRKKNIMNNIARCKTKLESIKEKINSIKDECCFICTDPFENPTIMNCCKSIFCLKCLLTTLKTVGSKCPYCRHAIKSNKDYQIISSGGTSNKKKKSEIVGKYKFNEMDKADVLEQVLSYISKNDENPKILIFSDYSQTFEKITKNIAKANLQYAYLSGTPAHITNLITEFENGITNILMLNSQNFGSGLNLQSANYLILYHRMLPELETQVIGRAQRFGRKNNLRVIFMVNDNENRDCRLDSKPINILSDSELWMITNPTDLNEEPDEESDEGSDEDVEKSKDKKSSDKKSSDKKKSEKKSSDKKSSNKKNSKKKTYVKPKSSKKTSQKVKKTDSDNESELSGLSDSDDLDDSDDLGILSDSSDSDDFGNLSDSDDLSDSDESEIEIPKKSKKTSKSSKKNKIGGSNKTLKKKAPVRKLIKV</sequence>
<proteinExistence type="predicted"/>
<organismHost>
    <name type="scientific">Acanthamoeba polyphaga</name>
    <name type="common">Amoeba</name>
    <dbReference type="NCBI Taxonomy" id="5757"/>
</organismHost>
<accession>Q5UP58</accession>